<dbReference type="EMBL" id="Z28592">
    <property type="protein sequence ID" value="CAA82254.1"/>
    <property type="molecule type" value="Genomic_DNA"/>
</dbReference>
<dbReference type="EMBL" id="AL009126">
    <property type="protein sequence ID" value="CAB15704.1"/>
    <property type="molecule type" value="Genomic_DNA"/>
</dbReference>
<dbReference type="PIR" id="I40362">
    <property type="entry name" value="I40362"/>
</dbReference>
<dbReference type="RefSeq" id="NP_391568.1">
    <property type="nucleotide sequence ID" value="NC_000964.3"/>
</dbReference>
<dbReference type="RefSeq" id="WP_003242621.1">
    <property type="nucleotide sequence ID" value="NZ_OZ025638.1"/>
</dbReference>
<dbReference type="SMR" id="P37813"/>
<dbReference type="FunCoup" id="P37813">
    <property type="interactions" value="395"/>
</dbReference>
<dbReference type="IntAct" id="P37813">
    <property type="interactions" value="2"/>
</dbReference>
<dbReference type="STRING" id="224308.BSU36870"/>
<dbReference type="PaxDb" id="224308-BSU36870"/>
<dbReference type="EnsemblBacteria" id="CAB15704">
    <property type="protein sequence ID" value="CAB15704"/>
    <property type="gene ID" value="BSU_36870"/>
</dbReference>
<dbReference type="GeneID" id="937004"/>
<dbReference type="KEGG" id="bsu:BSU36870"/>
<dbReference type="PATRIC" id="fig|224308.179.peg.3994"/>
<dbReference type="eggNOG" id="COG0356">
    <property type="taxonomic scope" value="Bacteria"/>
</dbReference>
<dbReference type="InParanoid" id="P37813"/>
<dbReference type="OrthoDB" id="9789241at2"/>
<dbReference type="PhylomeDB" id="P37813"/>
<dbReference type="BioCyc" id="BSUB:BSU36870-MONOMER"/>
<dbReference type="Proteomes" id="UP000001570">
    <property type="component" value="Chromosome"/>
</dbReference>
<dbReference type="GO" id="GO:0005886">
    <property type="term" value="C:plasma membrane"/>
    <property type="evidence" value="ECO:0000318"/>
    <property type="project" value="GO_Central"/>
</dbReference>
<dbReference type="GO" id="GO:0045259">
    <property type="term" value="C:proton-transporting ATP synthase complex"/>
    <property type="evidence" value="ECO:0007669"/>
    <property type="project" value="UniProtKB-KW"/>
</dbReference>
<dbReference type="GO" id="GO:0046933">
    <property type="term" value="F:proton-transporting ATP synthase activity, rotational mechanism"/>
    <property type="evidence" value="ECO:0000318"/>
    <property type="project" value="GO_Central"/>
</dbReference>
<dbReference type="GO" id="GO:0042777">
    <property type="term" value="P:proton motive force-driven plasma membrane ATP synthesis"/>
    <property type="evidence" value="ECO:0000318"/>
    <property type="project" value="GO_Central"/>
</dbReference>
<dbReference type="CDD" id="cd00310">
    <property type="entry name" value="ATP-synt_Fo_a_6"/>
    <property type="match status" value="1"/>
</dbReference>
<dbReference type="FunFam" id="1.20.120.220:FF:000005">
    <property type="entry name" value="ATP synthase subunit a"/>
    <property type="match status" value="1"/>
</dbReference>
<dbReference type="Gene3D" id="1.20.120.220">
    <property type="entry name" value="ATP synthase, F0 complex, subunit A"/>
    <property type="match status" value="1"/>
</dbReference>
<dbReference type="HAMAP" id="MF_01393">
    <property type="entry name" value="ATP_synth_a_bact"/>
    <property type="match status" value="1"/>
</dbReference>
<dbReference type="InterPro" id="IPR045082">
    <property type="entry name" value="ATP_syn_F0_a_bact/chloroplast"/>
</dbReference>
<dbReference type="InterPro" id="IPR000568">
    <property type="entry name" value="ATP_synth_F0_asu"/>
</dbReference>
<dbReference type="InterPro" id="IPR023011">
    <property type="entry name" value="ATP_synth_F0_asu_AS"/>
</dbReference>
<dbReference type="InterPro" id="IPR035908">
    <property type="entry name" value="F0_ATP_A_sf"/>
</dbReference>
<dbReference type="NCBIfam" id="TIGR01131">
    <property type="entry name" value="ATP_synt_6_or_A"/>
    <property type="match status" value="1"/>
</dbReference>
<dbReference type="NCBIfam" id="NF004479">
    <property type="entry name" value="PRK05815.1-4"/>
    <property type="match status" value="1"/>
</dbReference>
<dbReference type="PANTHER" id="PTHR42823">
    <property type="entry name" value="ATP SYNTHASE SUBUNIT A, CHLOROPLASTIC"/>
    <property type="match status" value="1"/>
</dbReference>
<dbReference type="PANTHER" id="PTHR42823:SF3">
    <property type="entry name" value="ATP SYNTHASE SUBUNIT A, CHLOROPLASTIC"/>
    <property type="match status" value="1"/>
</dbReference>
<dbReference type="Pfam" id="PF00119">
    <property type="entry name" value="ATP-synt_A"/>
    <property type="match status" value="1"/>
</dbReference>
<dbReference type="PRINTS" id="PR00123">
    <property type="entry name" value="ATPASEA"/>
</dbReference>
<dbReference type="SUPFAM" id="SSF81336">
    <property type="entry name" value="F1F0 ATP synthase subunit A"/>
    <property type="match status" value="1"/>
</dbReference>
<dbReference type="PROSITE" id="PS00449">
    <property type="entry name" value="ATPASE_A"/>
    <property type="match status" value="1"/>
</dbReference>
<accession>P37813</accession>
<evidence type="ECO:0000255" key="1">
    <source>
        <dbReference type="HAMAP-Rule" id="MF_01393"/>
    </source>
</evidence>
<evidence type="ECO:0000269" key="2">
    <source>
    </source>
</evidence>
<evidence type="ECO:0000305" key="3"/>
<gene>
    <name evidence="1" type="primary">atpB</name>
    <name type="ordered locus">BSU36870</name>
</gene>
<organism>
    <name type="scientific">Bacillus subtilis (strain 168)</name>
    <dbReference type="NCBI Taxonomy" id="224308"/>
    <lineage>
        <taxon>Bacteria</taxon>
        <taxon>Bacillati</taxon>
        <taxon>Bacillota</taxon>
        <taxon>Bacilli</taxon>
        <taxon>Bacillales</taxon>
        <taxon>Bacillaceae</taxon>
        <taxon>Bacillus</taxon>
    </lineage>
</organism>
<protein>
    <recommendedName>
        <fullName evidence="1">ATP synthase subunit a</fullName>
    </recommendedName>
    <alternativeName>
        <fullName evidence="1">ATP synthase F0 sector subunit a</fullName>
    </alternativeName>
    <alternativeName>
        <fullName evidence="1">F-ATPase subunit 6</fullName>
    </alternativeName>
</protein>
<proteinExistence type="evidence at protein level"/>
<comment type="function">
    <text evidence="1">Key component of the proton channel; it plays a direct role in the translocation of protons across the membrane.</text>
</comment>
<comment type="subunit">
    <text evidence="1 2 3">F-type ATPases have 2 components, CF(1) - the catalytic core - and CF(0) - the membrane proton channel. CF(1) has five subunits: alpha(3), beta(3), gamma(1), delta(1), epsilon(1). CF(0) has three main subunits: a(1), b(2) and c(9-12). The alpha and beta chains form an alternating ring which encloses part of the gamma chain. CF(1) is attached to CF(0) by a central stalk formed by the gamma and epsilon chains, while a peripheral stalk is formed by the delta and b chains (Probable). The F(1)F(0) complex interacts with SpoIIIJ and YqjG; YqgA is found in the same complex.</text>
</comment>
<comment type="subcellular location">
    <subcellularLocation>
        <location evidence="1">Cell membrane</location>
        <topology evidence="1">Multi-pass membrane protein</topology>
    </subcellularLocation>
</comment>
<comment type="similarity">
    <text evidence="1">Belongs to the ATPase A chain family.</text>
</comment>
<name>ATP6_BACSU</name>
<sequence length="244" mass="27054">MNHGYRTIEFLGLTFNLTNILMITVASVIVLLIAILTTRTLSIRPGKAQNFMEWIVDFVRNIIGSTMDLKTGANFLALGVTLLMYIFVSNMLGLPFSITIGHELWWKSPTADPAITLTLAVMVVALTHYYGVKMKGLKEYSKDYLRPVPFMLPMKIIEEFANTLTLGLRLYGNIFAGEILLGLLAGLATSHYSQSVALGLVGTIGAILPMLAWQAFSLFIGAIQAFIFTMLTMVYMSHKISHDH</sequence>
<keyword id="KW-0066">ATP synthesis</keyword>
<keyword id="KW-1003">Cell membrane</keyword>
<keyword id="KW-0138">CF(0)</keyword>
<keyword id="KW-0375">Hydrogen ion transport</keyword>
<keyword id="KW-0406">Ion transport</keyword>
<keyword id="KW-0472">Membrane</keyword>
<keyword id="KW-1185">Reference proteome</keyword>
<keyword id="KW-0812">Transmembrane</keyword>
<keyword id="KW-1133">Transmembrane helix</keyword>
<keyword id="KW-0813">Transport</keyword>
<feature type="chain" id="PRO_0000082048" description="ATP synthase subunit a">
    <location>
        <begin position="1"/>
        <end position="244"/>
    </location>
</feature>
<feature type="transmembrane region" description="Helical" evidence="1">
    <location>
        <begin position="17"/>
        <end position="37"/>
    </location>
</feature>
<feature type="transmembrane region" description="Helical" evidence="1">
    <location>
        <begin position="75"/>
        <end position="95"/>
    </location>
</feature>
<feature type="transmembrane region" description="Helical" evidence="1">
    <location>
        <begin position="112"/>
        <end position="132"/>
    </location>
</feature>
<feature type="transmembrane region" description="Helical" evidence="1">
    <location>
        <begin position="170"/>
        <end position="190"/>
    </location>
</feature>
<feature type="transmembrane region" description="Helical" evidence="1">
    <location>
        <begin position="221"/>
        <end position="241"/>
    </location>
</feature>
<reference key="1">
    <citation type="journal article" date="1994" name="J. Bacteriol.">
        <title>Bacillus subtilis F0F1 ATPase: DNA sequence of the atp operon and characterization of atp mutants.</title>
        <authorList>
            <person name="Santana M."/>
            <person name="Ionescu M.S."/>
            <person name="Vertes A."/>
            <person name="Longin R."/>
            <person name="Kunst F."/>
            <person name="Danchin A."/>
            <person name="Glaser P."/>
        </authorList>
    </citation>
    <scope>NUCLEOTIDE SEQUENCE [GENOMIC DNA]</scope>
    <source>
        <strain>168</strain>
    </source>
</reference>
<reference key="2">
    <citation type="journal article" date="1997" name="Nature">
        <title>The complete genome sequence of the Gram-positive bacterium Bacillus subtilis.</title>
        <authorList>
            <person name="Kunst F."/>
            <person name="Ogasawara N."/>
            <person name="Moszer I."/>
            <person name="Albertini A.M."/>
            <person name="Alloni G."/>
            <person name="Azevedo V."/>
            <person name="Bertero M.G."/>
            <person name="Bessieres P."/>
            <person name="Bolotin A."/>
            <person name="Borchert S."/>
            <person name="Borriss R."/>
            <person name="Boursier L."/>
            <person name="Brans A."/>
            <person name="Braun M."/>
            <person name="Brignell S.C."/>
            <person name="Bron S."/>
            <person name="Brouillet S."/>
            <person name="Bruschi C.V."/>
            <person name="Caldwell B."/>
            <person name="Capuano V."/>
            <person name="Carter N.M."/>
            <person name="Choi S.-K."/>
            <person name="Codani J.-J."/>
            <person name="Connerton I.F."/>
            <person name="Cummings N.J."/>
            <person name="Daniel R.A."/>
            <person name="Denizot F."/>
            <person name="Devine K.M."/>
            <person name="Duesterhoeft A."/>
            <person name="Ehrlich S.D."/>
            <person name="Emmerson P.T."/>
            <person name="Entian K.-D."/>
            <person name="Errington J."/>
            <person name="Fabret C."/>
            <person name="Ferrari E."/>
            <person name="Foulger D."/>
            <person name="Fritz C."/>
            <person name="Fujita M."/>
            <person name="Fujita Y."/>
            <person name="Fuma S."/>
            <person name="Galizzi A."/>
            <person name="Galleron N."/>
            <person name="Ghim S.-Y."/>
            <person name="Glaser P."/>
            <person name="Goffeau A."/>
            <person name="Golightly E.J."/>
            <person name="Grandi G."/>
            <person name="Guiseppi G."/>
            <person name="Guy B.J."/>
            <person name="Haga K."/>
            <person name="Haiech J."/>
            <person name="Harwood C.R."/>
            <person name="Henaut A."/>
            <person name="Hilbert H."/>
            <person name="Holsappel S."/>
            <person name="Hosono S."/>
            <person name="Hullo M.-F."/>
            <person name="Itaya M."/>
            <person name="Jones L.-M."/>
            <person name="Joris B."/>
            <person name="Karamata D."/>
            <person name="Kasahara Y."/>
            <person name="Klaerr-Blanchard M."/>
            <person name="Klein C."/>
            <person name="Kobayashi Y."/>
            <person name="Koetter P."/>
            <person name="Koningstein G."/>
            <person name="Krogh S."/>
            <person name="Kumano M."/>
            <person name="Kurita K."/>
            <person name="Lapidus A."/>
            <person name="Lardinois S."/>
            <person name="Lauber J."/>
            <person name="Lazarevic V."/>
            <person name="Lee S.-M."/>
            <person name="Levine A."/>
            <person name="Liu H."/>
            <person name="Masuda S."/>
            <person name="Mauel C."/>
            <person name="Medigue C."/>
            <person name="Medina N."/>
            <person name="Mellado R.P."/>
            <person name="Mizuno M."/>
            <person name="Moestl D."/>
            <person name="Nakai S."/>
            <person name="Noback M."/>
            <person name="Noone D."/>
            <person name="O'Reilly M."/>
            <person name="Ogawa K."/>
            <person name="Ogiwara A."/>
            <person name="Oudega B."/>
            <person name="Park S.-H."/>
            <person name="Parro V."/>
            <person name="Pohl T.M."/>
            <person name="Portetelle D."/>
            <person name="Porwollik S."/>
            <person name="Prescott A.M."/>
            <person name="Presecan E."/>
            <person name="Pujic P."/>
            <person name="Purnelle B."/>
            <person name="Rapoport G."/>
            <person name="Rey M."/>
            <person name="Reynolds S."/>
            <person name="Rieger M."/>
            <person name="Rivolta C."/>
            <person name="Rocha E."/>
            <person name="Roche B."/>
            <person name="Rose M."/>
            <person name="Sadaie Y."/>
            <person name="Sato T."/>
            <person name="Scanlan E."/>
            <person name="Schleich S."/>
            <person name="Schroeter R."/>
            <person name="Scoffone F."/>
            <person name="Sekiguchi J."/>
            <person name="Sekowska A."/>
            <person name="Seror S.J."/>
            <person name="Serror P."/>
            <person name="Shin B.-S."/>
            <person name="Soldo B."/>
            <person name="Sorokin A."/>
            <person name="Tacconi E."/>
            <person name="Takagi T."/>
            <person name="Takahashi H."/>
            <person name="Takemaru K."/>
            <person name="Takeuchi M."/>
            <person name="Tamakoshi A."/>
            <person name="Tanaka T."/>
            <person name="Terpstra P."/>
            <person name="Tognoni A."/>
            <person name="Tosato V."/>
            <person name="Uchiyama S."/>
            <person name="Vandenbol M."/>
            <person name="Vannier F."/>
            <person name="Vassarotti A."/>
            <person name="Viari A."/>
            <person name="Wambutt R."/>
            <person name="Wedler E."/>
            <person name="Wedler H."/>
            <person name="Weitzenegger T."/>
            <person name="Winters P."/>
            <person name="Wipat A."/>
            <person name="Yamamoto H."/>
            <person name="Yamane K."/>
            <person name="Yasumoto K."/>
            <person name="Yata K."/>
            <person name="Yoshida K."/>
            <person name="Yoshikawa H.-F."/>
            <person name="Zumstein E."/>
            <person name="Yoshikawa H."/>
            <person name="Danchin A."/>
        </authorList>
    </citation>
    <scope>NUCLEOTIDE SEQUENCE [LARGE SCALE GENOMIC DNA]</scope>
    <source>
        <strain>168</strain>
    </source>
</reference>
<reference key="3">
    <citation type="journal article" date="2009" name="J. Bacteriol.">
        <title>Bacillus subtilis SpoIIIJ and YqjG function in membrane protein biogenesis.</title>
        <authorList>
            <person name="Saller M.J."/>
            <person name="Fusetti F."/>
            <person name="Driessen A.J."/>
        </authorList>
    </citation>
    <scope>IDENTIFICATION BY MASS SPECTROMETRY</scope>
    <scope>INTERACTION WITH SPOIIIJ AND YQJG</scope>
    <source>
        <strain>168</strain>
    </source>
</reference>